<organism>
    <name type="scientific">Porphyra purpurea</name>
    <name type="common">Red seaweed</name>
    <name type="synonym">Ulva purpurea</name>
    <dbReference type="NCBI Taxonomy" id="2787"/>
    <lineage>
        <taxon>Eukaryota</taxon>
        <taxon>Rhodophyta</taxon>
        <taxon>Bangiophyceae</taxon>
        <taxon>Bangiales</taxon>
        <taxon>Bangiaceae</taxon>
        <taxon>Porphyra</taxon>
    </lineage>
</organism>
<reference key="1">
    <citation type="journal article" date="1995" name="Plant Mol. Biol. Rep.">
        <title>Complete nucleotide sequence of the Porphyra purpurea chloroplast genome.</title>
        <authorList>
            <person name="Reith M.E."/>
            <person name="Munholland J."/>
        </authorList>
    </citation>
    <scope>NUCLEOTIDE SEQUENCE [LARGE SCALE GENOMIC DNA]</scope>
    <source>
        <strain>Avonport</strain>
    </source>
</reference>
<gene>
    <name evidence="1" type="primary">atpB</name>
</gene>
<accession>P51259</accession>
<feature type="chain" id="PRO_0000144543" description="ATP synthase subunit beta, chloroplastic">
    <location>
        <begin position="1"/>
        <end position="475"/>
    </location>
</feature>
<feature type="binding site" evidence="1">
    <location>
        <begin position="155"/>
        <end position="162"/>
    </location>
    <ligand>
        <name>ATP</name>
        <dbReference type="ChEBI" id="CHEBI:30616"/>
    </ligand>
</feature>
<name>ATPB_PORPU</name>
<keyword id="KW-0066">ATP synthesis</keyword>
<keyword id="KW-0067">ATP-binding</keyword>
<keyword id="KW-0139">CF(1)</keyword>
<keyword id="KW-0150">Chloroplast</keyword>
<keyword id="KW-0375">Hydrogen ion transport</keyword>
<keyword id="KW-0406">Ion transport</keyword>
<keyword id="KW-0472">Membrane</keyword>
<keyword id="KW-0547">Nucleotide-binding</keyword>
<keyword id="KW-0934">Plastid</keyword>
<keyword id="KW-0793">Thylakoid</keyword>
<keyword id="KW-1278">Translocase</keyword>
<keyword id="KW-0813">Transport</keyword>
<dbReference type="EC" id="7.1.2.2" evidence="1"/>
<dbReference type="EMBL" id="U38804">
    <property type="protein sequence ID" value="AAC08145.1"/>
    <property type="molecule type" value="Genomic_DNA"/>
</dbReference>
<dbReference type="PIR" id="S73180">
    <property type="entry name" value="S73180"/>
</dbReference>
<dbReference type="RefSeq" id="NP_053869.1">
    <property type="nucleotide sequence ID" value="NC_000925.1"/>
</dbReference>
<dbReference type="SMR" id="P51259"/>
<dbReference type="GeneID" id="809888"/>
<dbReference type="GO" id="GO:0009535">
    <property type="term" value="C:chloroplast thylakoid membrane"/>
    <property type="evidence" value="ECO:0007669"/>
    <property type="project" value="UniProtKB-SubCell"/>
</dbReference>
<dbReference type="GO" id="GO:0005739">
    <property type="term" value="C:mitochondrion"/>
    <property type="evidence" value="ECO:0007669"/>
    <property type="project" value="GOC"/>
</dbReference>
<dbReference type="GO" id="GO:0045259">
    <property type="term" value="C:proton-transporting ATP synthase complex"/>
    <property type="evidence" value="ECO:0007669"/>
    <property type="project" value="UniProtKB-KW"/>
</dbReference>
<dbReference type="GO" id="GO:0005524">
    <property type="term" value="F:ATP binding"/>
    <property type="evidence" value="ECO:0007669"/>
    <property type="project" value="UniProtKB-UniRule"/>
</dbReference>
<dbReference type="GO" id="GO:0016887">
    <property type="term" value="F:ATP hydrolysis activity"/>
    <property type="evidence" value="ECO:0007669"/>
    <property type="project" value="InterPro"/>
</dbReference>
<dbReference type="GO" id="GO:0046933">
    <property type="term" value="F:proton-transporting ATP synthase activity, rotational mechanism"/>
    <property type="evidence" value="ECO:0007669"/>
    <property type="project" value="UniProtKB-UniRule"/>
</dbReference>
<dbReference type="GO" id="GO:0042776">
    <property type="term" value="P:proton motive force-driven mitochondrial ATP synthesis"/>
    <property type="evidence" value="ECO:0007669"/>
    <property type="project" value="TreeGrafter"/>
</dbReference>
<dbReference type="CDD" id="cd18110">
    <property type="entry name" value="ATP-synt_F1_beta_C"/>
    <property type="match status" value="1"/>
</dbReference>
<dbReference type="CDD" id="cd18115">
    <property type="entry name" value="ATP-synt_F1_beta_N"/>
    <property type="match status" value="1"/>
</dbReference>
<dbReference type="CDD" id="cd01133">
    <property type="entry name" value="F1-ATPase_beta_CD"/>
    <property type="match status" value="1"/>
</dbReference>
<dbReference type="FunFam" id="1.10.1140.10:FF:000001">
    <property type="entry name" value="ATP synthase subunit beta"/>
    <property type="match status" value="1"/>
</dbReference>
<dbReference type="FunFam" id="2.40.10.170:FF:000005">
    <property type="entry name" value="ATP synthase subunit beta"/>
    <property type="match status" value="1"/>
</dbReference>
<dbReference type="FunFam" id="3.40.50.12240:FF:000006">
    <property type="entry name" value="ATP synthase subunit beta"/>
    <property type="match status" value="1"/>
</dbReference>
<dbReference type="FunFam" id="3.40.50.300:FF:000026">
    <property type="entry name" value="ATP synthase subunit beta"/>
    <property type="match status" value="1"/>
</dbReference>
<dbReference type="Gene3D" id="2.40.10.170">
    <property type="match status" value="1"/>
</dbReference>
<dbReference type="Gene3D" id="1.10.1140.10">
    <property type="entry name" value="Bovine Mitochondrial F1-atpase, Atp Synthase Beta Chain, Chain D, domain 3"/>
    <property type="match status" value="1"/>
</dbReference>
<dbReference type="Gene3D" id="3.40.50.300">
    <property type="entry name" value="P-loop containing nucleotide triphosphate hydrolases"/>
    <property type="match status" value="1"/>
</dbReference>
<dbReference type="HAMAP" id="MF_01347">
    <property type="entry name" value="ATP_synth_beta_bact"/>
    <property type="match status" value="1"/>
</dbReference>
<dbReference type="InterPro" id="IPR003593">
    <property type="entry name" value="AAA+_ATPase"/>
</dbReference>
<dbReference type="InterPro" id="IPR055190">
    <property type="entry name" value="ATP-synt_VA_C"/>
</dbReference>
<dbReference type="InterPro" id="IPR005722">
    <property type="entry name" value="ATP_synth_F1_bsu"/>
</dbReference>
<dbReference type="InterPro" id="IPR020003">
    <property type="entry name" value="ATPase_a/bsu_AS"/>
</dbReference>
<dbReference type="InterPro" id="IPR050053">
    <property type="entry name" value="ATPase_alpha/beta_chains"/>
</dbReference>
<dbReference type="InterPro" id="IPR004100">
    <property type="entry name" value="ATPase_F1/V1/A1_a/bsu_N"/>
</dbReference>
<dbReference type="InterPro" id="IPR036121">
    <property type="entry name" value="ATPase_F1/V1/A1_a/bsu_N_sf"/>
</dbReference>
<dbReference type="InterPro" id="IPR000194">
    <property type="entry name" value="ATPase_F1/V1/A1_a/bsu_nucl-bd"/>
</dbReference>
<dbReference type="InterPro" id="IPR024034">
    <property type="entry name" value="ATPase_F1/V1_b/a_C"/>
</dbReference>
<dbReference type="InterPro" id="IPR027417">
    <property type="entry name" value="P-loop_NTPase"/>
</dbReference>
<dbReference type="NCBIfam" id="TIGR01039">
    <property type="entry name" value="atpD"/>
    <property type="match status" value="1"/>
</dbReference>
<dbReference type="PANTHER" id="PTHR15184">
    <property type="entry name" value="ATP SYNTHASE"/>
    <property type="match status" value="1"/>
</dbReference>
<dbReference type="PANTHER" id="PTHR15184:SF71">
    <property type="entry name" value="ATP SYNTHASE SUBUNIT BETA, MITOCHONDRIAL"/>
    <property type="match status" value="1"/>
</dbReference>
<dbReference type="Pfam" id="PF00006">
    <property type="entry name" value="ATP-synt_ab"/>
    <property type="match status" value="1"/>
</dbReference>
<dbReference type="Pfam" id="PF02874">
    <property type="entry name" value="ATP-synt_ab_N"/>
    <property type="match status" value="1"/>
</dbReference>
<dbReference type="Pfam" id="PF22919">
    <property type="entry name" value="ATP-synt_VA_C"/>
    <property type="match status" value="1"/>
</dbReference>
<dbReference type="SMART" id="SM00382">
    <property type="entry name" value="AAA"/>
    <property type="match status" value="1"/>
</dbReference>
<dbReference type="SUPFAM" id="SSF47917">
    <property type="entry name" value="C-terminal domain of alpha and beta subunits of F1 ATP synthase"/>
    <property type="match status" value="1"/>
</dbReference>
<dbReference type="SUPFAM" id="SSF50615">
    <property type="entry name" value="N-terminal domain of alpha and beta subunits of F1 ATP synthase"/>
    <property type="match status" value="1"/>
</dbReference>
<dbReference type="SUPFAM" id="SSF52540">
    <property type="entry name" value="P-loop containing nucleoside triphosphate hydrolases"/>
    <property type="match status" value="1"/>
</dbReference>
<dbReference type="PROSITE" id="PS00152">
    <property type="entry name" value="ATPASE_ALPHA_BETA"/>
    <property type="match status" value="1"/>
</dbReference>
<sequence>MVSTTKSTGSVTQIIGPVLDIAFPNGQLPKVFNALKVQSTDGTITCEVQQLLGDNKVRAVSMSSTEGLKRGVEVVDTGAPISVPVGTNTLGRIFNVLGEPVDNLGPVSSESTLPIHRPAPAFTKLETKPSIFETGIKVVDLLAPYRRGGKIGLFGGAGVGKTVLIMELINNIAKAHGGVSVFGGVGERTREGNDLYMEMKESKVINEDNLKESKVALVYGQMNEPPGARMRVGLTALTMAEYFRDINKQDVLLFIDNIFRFVQAGSEVSALLGRMPSAVGYQPTLATEMGALQERITSTTEGSITSIQAVYVPADDLTDPAPATTFAHLDATTVLSRNLAAKGIYPAVDPLDSTSTMLQPGIVGTDHYSTAQEVKSTLQRYKELQDIIAILGLDELSEEDRQTVSRARKIERFLSQPFFVAEVFTGSPGKYVSLEDAIKGFQMILKGELDDLPEQAFYLVGDIDEAIQKADSMKD</sequence>
<comment type="function">
    <text evidence="1">Produces ATP from ADP in the presence of a proton gradient across the membrane. The catalytic sites are hosted primarily by the beta subunits.</text>
</comment>
<comment type="catalytic activity">
    <reaction evidence="1">
        <text>ATP + H2O + 4 H(+)(in) = ADP + phosphate + 5 H(+)(out)</text>
        <dbReference type="Rhea" id="RHEA:57720"/>
        <dbReference type="ChEBI" id="CHEBI:15377"/>
        <dbReference type="ChEBI" id="CHEBI:15378"/>
        <dbReference type="ChEBI" id="CHEBI:30616"/>
        <dbReference type="ChEBI" id="CHEBI:43474"/>
        <dbReference type="ChEBI" id="CHEBI:456216"/>
        <dbReference type="EC" id="7.1.2.2"/>
    </reaction>
</comment>
<comment type="subunit">
    <text evidence="1">F-type ATPases have 2 components, CF(1) - the catalytic core - and CF(0) - the membrane proton channel. CF(1) has five subunits: alpha(3), beta(3), gamma(1), delta(1), epsilon(1). CF(0) has four main subunits: a(1), b(1), b'(1) and c(9-12).</text>
</comment>
<comment type="subcellular location">
    <subcellularLocation>
        <location evidence="1">Plastid</location>
        <location evidence="1">Chloroplast thylakoid membrane</location>
        <topology evidence="1">Peripheral membrane protein</topology>
    </subcellularLocation>
</comment>
<comment type="similarity">
    <text evidence="1">Belongs to the ATPase alpha/beta chains family.</text>
</comment>
<proteinExistence type="inferred from homology"/>
<protein>
    <recommendedName>
        <fullName evidence="1">ATP synthase subunit beta, chloroplastic</fullName>
        <ecNumber evidence="1">7.1.2.2</ecNumber>
    </recommendedName>
    <alternativeName>
        <fullName evidence="1">ATP synthase F1 sector subunit beta</fullName>
    </alternativeName>
    <alternativeName>
        <fullName evidence="1">F-ATPase subunit beta</fullName>
    </alternativeName>
</protein>
<evidence type="ECO:0000255" key="1">
    <source>
        <dbReference type="HAMAP-Rule" id="MF_01347"/>
    </source>
</evidence>
<geneLocation type="chloroplast"/>